<protein>
    <recommendedName>
        <fullName>Atos homolog protein B</fullName>
    </recommendedName>
</protein>
<gene>
    <name evidence="2" type="primary">ATOSB</name>
    <name evidence="2" type="synonym">FAM214B</name>
</gene>
<organism>
    <name type="scientific">Bos taurus</name>
    <name type="common">Bovine</name>
    <dbReference type="NCBI Taxonomy" id="9913"/>
    <lineage>
        <taxon>Eukaryota</taxon>
        <taxon>Metazoa</taxon>
        <taxon>Chordata</taxon>
        <taxon>Craniata</taxon>
        <taxon>Vertebrata</taxon>
        <taxon>Euteleostomi</taxon>
        <taxon>Mammalia</taxon>
        <taxon>Eutheria</taxon>
        <taxon>Laurasiatheria</taxon>
        <taxon>Artiodactyla</taxon>
        <taxon>Ruminantia</taxon>
        <taxon>Pecora</taxon>
        <taxon>Bovidae</taxon>
        <taxon>Bovinae</taxon>
        <taxon>Bos</taxon>
    </lineage>
</organism>
<feature type="chain" id="PRO_0000313619" description="Atos homolog protein B">
    <location>
        <begin position="1"/>
        <end position="538"/>
    </location>
</feature>
<feature type="region of interest" description="Disordered" evidence="3">
    <location>
        <begin position="1"/>
        <end position="98"/>
    </location>
</feature>
<feature type="region of interest" description="Disordered" evidence="3">
    <location>
        <begin position="129"/>
        <end position="185"/>
    </location>
</feature>
<feature type="region of interest" description="Disordered" evidence="3">
    <location>
        <begin position="201"/>
        <end position="303"/>
    </location>
</feature>
<feature type="region of interest" description="Required for macropage invasion" evidence="2">
    <location>
        <begin position="348"/>
        <end position="430"/>
    </location>
</feature>
<feature type="region of interest" description="Transactivation domain 1 (TAD1)" evidence="2">
    <location>
        <begin position="436"/>
        <end position="444"/>
    </location>
</feature>
<feature type="compositionally biased region" description="Polar residues" evidence="3">
    <location>
        <begin position="1"/>
        <end position="12"/>
    </location>
</feature>
<feature type="compositionally biased region" description="Polar residues" evidence="3">
    <location>
        <begin position="129"/>
        <end position="141"/>
    </location>
</feature>
<feature type="compositionally biased region" description="Pro residues" evidence="3">
    <location>
        <begin position="227"/>
        <end position="238"/>
    </location>
</feature>
<feature type="modified residue" description="Phosphoserine" evidence="2">
    <location>
        <position position="254"/>
    </location>
</feature>
<feature type="modified residue" description="Phosphoserine" evidence="2">
    <location>
        <position position="255"/>
    </location>
</feature>
<dbReference type="EMBL" id="BT021202">
    <property type="protein sequence ID" value="AAX31384.1"/>
    <property type="molecule type" value="mRNA"/>
</dbReference>
<dbReference type="RefSeq" id="NP_001014893.1">
    <property type="nucleotide sequence ID" value="NM_001014893.1"/>
</dbReference>
<dbReference type="RefSeq" id="XP_005210134.1">
    <property type="nucleotide sequence ID" value="XM_005210077.5"/>
</dbReference>
<dbReference type="RefSeq" id="XP_005210135.1">
    <property type="nucleotide sequence ID" value="XM_005210078.5"/>
</dbReference>
<dbReference type="RefSeq" id="XP_010806232.1">
    <property type="nucleotide sequence ID" value="XM_010807930.4"/>
</dbReference>
<dbReference type="RefSeq" id="XP_024851349.1">
    <property type="nucleotide sequence ID" value="XM_024995581.2"/>
</dbReference>
<dbReference type="FunCoup" id="Q5BIM2">
    <property type="interactions" value="664"/>
</dbReference>
<dbReference type="STRING" id="9913.ENSBTAP00000066676"/>
<dbReference type="PaxDb" id="9913-ENSBTAP00000015139"/>
<dbReference type="Ensembl" id="ENSBTAT00000015139.4">
    <property type="protein sequence ID" value="ENSBTAP00000015139.2"/>
    <property type="gene ID" value="ENSBTAG00000011394.4"/>
</dbReference>
<dbReference type="GeneID" id="510325"/>
<dbReference type="KEGG" id="bta:510325"/>
<dbReference type="CTD" id="80256"/>
<dbReference type="VEuPathDB" id="HostDB:ENSBTAG00000011394"/>
<dbReference type="VGNC" id="VGNC:28794">
    <property type="gene designation" value="ATOSB"/>
</dbReference>
<dbReference type="eggNOG" id="KOG2306">
    <property type="taxonomic scope" value="Eukaryota"/>
</dbReference>
<dbReference type="GeneTree" id="ENSGT00940000159834"/>
<dbReference type="HOGENOM" id="CLU_031463_0_0_1"/>
<dbReference type="InParanoid" id="Q5BIM2"/>
<dbReference type="OMA" id="CVVEQRG"/>
<dbReference type="OrthoDB" id="8625101at2759"/>
<dbReference type="TreeFam" id="TF325496"/>
<dbReference type="Proteomes" id="UP000009136">
    <property type="component" value="Chromosome 8"/>
</dbReference>
<dbReference type="Bgee" id="ENSBTAG00000011394">
    <property type="expression patterns" value="Expressed in semen and 105 other cell types or tissues"/>
</dbReference>
<dbReference type="GO" id="GO:0005634">
    <property type="term" value="C:nucleus"/>
    <property type="evidence" value="ECO:0007669"/>
    <property type="project" value="UniProtKB-SubCell"/>
</dbReference>
<dbReference type="InterPro" id="IPR033473">
    <property type="entry name" value="Atos-like_C"/>
</dbReference>
<dbReference type="InterPro" id="IPR025261">
    <property type="entry name" value="Atos-like_cons_dom"/>
</dbReference>
<dbReference type="InterPro" id="IPR051506">
    <property type="entry name" value="ATOS_Transcription_Regulators"/>
</dbReference>
<dbReference type="PANTHER" id="PTHR13199:SF12">
    <property type="entry name" value="ATOS HOMOLOG PROTEIN B"/>
    <property type="match status" value="1"/>
</dbReference>
<dbReference type="PANTHER" id="PTHR13199">
    <property type="entry name" value="GH03947P"/>
    <property type="match status" value="1"/>
</dbReference>
<dbReference type="Pfam" id="PF13889">
    <property type="entry name" value="Chromosome_seg"/>
    <property type="match status" value="1"/>
</dbReference>
<dbReference type="Pfam" id="PF13915">
    <property type="entry name" value="DUF4210"/>
    <property type="match status" value="1"/>
</dbReference>
<dbReference type="SMART" id="SM01177">
    <property type="entry name" value="DUF4210"/>
    <property type="match status" value="1"/>
</dbReference>
<accession>Q5BIM2</accession>
<name>ATOSB_BOVIN</name>
<proteinExistence type="evidence at transcript level"/>
<evidence type="ECO:0000250" key="1">
    <source>
        <dbReference type="UniProtKB" id="Q7JXG9"/>
    </source>
</evidence>
<evidence type="ECO:0000250" key="2">
    <source>
        <dbReference type="UniProtKB" id="Q8BR27"/>
    </source>
</evidence>
<evidence type="ECO:0000256" key="3">
    <source>
        <dbReference type="SAM" id="MobiDB-lite"/>
    </source>
</evidence>
<evidence type="ECO:0000305" key="4"/>
<comment type="function">
    <text evidence="2">Transcription regulator that may syncronize transcriptional and translational programs.</text>
</comment>
<comment type="subcellular location">
    <subcellularLocation>
        <location evidence="1">Nucleus</location>
    </subcellularLocation>
</comment>
<comment type="domain">
    <text evidence="2">The protein contains a transactivation domain (TAD) which may be required for transcriptional activation of a subset of target genes.</text>
</comment>
<comment type="similarity">
    <text evidence="4">Belongs to the ATOS family.</text>
</comment>
<reference key="1">
    <citation type="journal article" date="2005" name="BMC Genomics">
        <title>Characterization of 954 bovine full-CDS cDNA sequences.</title>
        <authorList>
            <person name="Harhay G.P."/>
            <person name="Sonstegard T.S."/>
            <person name="Keele J.W."/>
            <person name="Heaton M.P."/>
            <person name="Clawson M.L."/>
            <person name="Snelling W.M."/>
            <person name="Wiedmann R.T."/>
            <person name="Van Tassell C.P."/>
            <person name="Smith T.P.L."/>
        </authorList>
    </citation>
    <scope>NUCLEOTIDE SEQUENCE [LARGE SCALE MRNA]</scope>
</reference>
<sequence>MRHVQAETSPSSEPEAGPSQPAVRQGALQGGLLMGYSPAGGATSPGVYQVSIFSPPAGASEPPRALKRPAPPTEGPRELKRGPGLGAREGLSPEEPPTVGLLGPEGLGLKLGVASQHFCHHGLCVVEQGGSSTSPWTSGARSSPLPPSNASCSTLHTRDWASPDPRGQGSLGSSLGPAPPGQLHTLDTDLHSLAQIGGKSLVSGVGNGGSPWPRESPGTANGCSPEHTPPGPGPPGPCPTKRRLLPAGEALDVSSEDEGPAPRRRRGTLGHPPAANSSDAKATPFWSHLLPGPKEPVLDPTDCNPMGRRLKGARRLKLSSLRSLRKGPGLLSPPSASPVPAPAVSRTLLGNFEESLLRGRFAPSGRIEGFTAEIGASGSYCPQHVTLPVTVTFFDVSEQNAPAPFLGVVDLSPLGRKGYSVPKVGTIQVTLFNPNQTVVKMFLVTFDFSDMPAAHMTFLRHRLFLVPVGEEGNAGPTRRLLCYLLHLRFRSSRSGRLSLHGDIRLLFSRRSLELDTGLPYELQAVTEAPHNPRYSPLP</sequence>
<keyword id="KW-0539">Nucleus</keyword>
<keyword id="KW-0597">Phosphoprotein</keyword>
<keyword id="KW-1185">Reference proteome</keyword>